<feature type="chain" id="PRO_0000076174" description="Cation channel sperm-associated targeting subunit tau">
    <location>
        <begin position="1"/>
        <end position="1820"/>
    </location>
</feature>
<feature type="domain" description="C2" evidence="3">
    <location>
        <begin position="87"/>
        <end position="222"/>
    </location>
</feature>
<feature type="region of interest" description="Disordered" evidence="4">
    <location>
        <begin position="360"/>
        <end position="383"/>
    </location>
</feature>
<feature type="region of interest" description="Disordered" evidence="4">
    <location>
        <begin position="403"/>
        <end position="443"/>
    </location>
</feature>
<feature type="region of interest" description="Disordered" evidence="4">
    <location>
        <begin position="695"/>
        <end position="722"/>
    </location>
</feature>
<feature type="region of interest" description="Disordered" evidence="4">
    <location>
        <begin position="838"/>
        <end position="857"/>
    </location>
</feature>
<feature type="compositionally biased region" description="Polar residues" evidence="4">
    <location>
        <begin position="415"/>
        <end position="443"/>
    </location>
</feature>
<feature type="splice variant" id="VSP_061598" description="In isoform 3.">
    <original>DIPLVNEEAETTANELLDNDSEKGLTIPTLNQSDQDNSTADASKNDESTPSPTEVHSLCTISNQETIKAGRIPPLGERQSESMPDRKMKNVFFPLEVKLKDNYPSILKADSSLSEVAFSPKEYNSPSFRPEYIEFKPKFQFQKFNKNGFDPFLRNINKMSVRKRKDQDIYKYRNILGAEVIEHEDQDPPYPAQSKTAGPANTTWAHDPNIFTTKMLETENKLAPDPTINTIKGLDTKNSLKENLPNVSLPSIKGESSRAGNVQANTCHLSKSLNFTPHIEYLKQSMILKSILSENLQDLSDKLFSKPEVSMNSEAREKSSSPLLSIHDKSSSSMEDNVLEKKQDLNNWLSEKDILNSKTTLSQIIKNIPADSFSEGSQIIENIPADSLLEGGQVIKNIPEYSLSEGGQIIKNIPADSFLESGPGQSPEVEEHVSKKHFEADERDFPIKKNSSTKKKHLISEVPNSKSGSSGTVHDYIMRQIFTAPIFSELEIEVKEPSETPMNLENQLPTPWKRSLSSHILFHEENADEIELPQPRSATSQIIQAFPIDTLLESGIIKVIELDKEHHKSSLLGTGITSPKGNLKDSQEYYSEIRSETEPLSEQSIPIIPKDTTSVSRAEFIQEDQNMFPQDSSYYSIANKELYLPRNGQRLCKDKNDLSSTLESLTNSLMDKLSESDEIMLKSFLKNIFNVFFKYNHSERRGQPEKELERLIQPSFTSDTEHLEELQEDFDKADKLDRKPILSPKLRVFLEELSESEVKHLKSELSKQIQHYLVERLSESGHITKEDLPKIYQNLYLMNEKAEQKGPNSFQGKYSETVKEIMSFVNNFNHHFIDKHLEIKLRSFLKEILQNYFLKNISESSLFNETASETIYPNISSLRTKSVSISFHELEQDISKGSFGRRFEINMKYPLSKSLQNYLIALSENELLHLKADLSKHLQSLFIEKLSKSGLMTKKQLEGINQHINLLNSSSIPLKYIKTHLPFRDDCHFVEKHSEKQNKYSRIVQQTTLQTVSEDKLREAELIREKEKKYFPLQNLKGNSSLIKEQKSYYTKEEAKTPSLIKVQPSSNENIQASPLSKSSEILTDILLKKLRKEHVFTQLPQAENSVHKTEIQDPYSWGGKSKITQSKAWCEKTLKMKSLDRKEHVNIYKWTVQEKPEAVLTSYPRIPNARMPREDEYLNRITFPSWQSSTLTHFNTETGEKSKLEDQYCQTLKGNNNNNKKHLVTFAQYKKEIQTLYIKPDEICSEKCAKFPEIQSFQYKVVEDEKNLKPHLFPELFKIEDLKPKVRKERDRVAQPKKSFNKIVRILPTTLPTTRIHLKKSVPRTLLHWTARRTIHDCSDKFEDLHDMTSFTHLKKVKSRSRLLGKSSDDIHNHARHSARPYTAPEVNKQRESYSGKFTSRRMVSSGLVHINDKTSDYEMHKMRPKKIKRGY</original>
    <variation>GGFFTKRI</variation>
    <location>
        <begin position="388"/>
        <end position="1820"/>
    </location>
</feature>
<feature type="splice variant" id="VSP_061599" description="In isoform 4.">
    <original>AFSPKEYNSPSFRPEYIEFKPKFQFQKFNKNGFDPFLRNINKMSVRK</original>
    <variation>NLRSICINPKSRNLDSSPTEISWQNNNLNLAERENTGLVSTRLKIKR</variation>
    <location>
        <begin position="504"/>
        <end position="550"/>
    </location>
</feature>
<feature type="splice variant" id="VSP_061600" description="In isoform 2.">
    <original>FQKFNKNGFDPFLRNINKMSVRKRKDQDIYKYRNILGAEVIEHEDQDPPYPAQSKTAGPANTTWAHDPNIFTTKMLETENKLAPDPTINTIKGLDT</original>
    <variation>DCSDKFEDLHDMTSFTHLKKVKSRSRLLGKSSDDIHNHARHSARPYTAPEVNKQRESYSGKFTSRRMVSSGLVHINDKTSDYEMHKMRPKKIKRGY</variation>
    <location>
        <begin position="528"/>
        <end position="623"/>
    </location>
</feature>
<feature type="splice variant" id="VSP_061601" description="In isoform 4.">
    <location>
        <begin position="551"/>
        <end position="1820"/>
    </location>
</feature>
<feature type="splice variant" id="VSP_061602" description="In isoform 2.">
    <location>
        <begin position="624"/>
        <end position="1820"/>
    </location>
</feature>
<feature type="sequence variant" id="VAR_086977" description="In SPGF68; uncertain significance; dbSNP:rs2105806061." evidence="9">
    <original>H</original>
    <variation>R</variation>
    <location>
        <position position="113"/>
    </location>
</feature>
<feature type="sequence variant" id="VAR_035787" description="In a colorectal cancer sample; somatic mutation." evidence="7">
    <original>K</original>
    <variation>M</variation>
    <location>
        <position position="123"/>
    </location>
</feature>
<feature type="sequence variant" id="VAR_024769" description="In dbSNP:rs10804117." evidence="5 6 8">
    <original>H</original>
    <variation>Q</variation>
    <location>
        <position position="376"/>
    </location>
</feature>
<feature type="sequence conflict" description="In Ref. 2; BX648732." evidence="12" ref="2">
    <original>M</original>
    <variation>T</variation>
    <location>
        <position position="698"/>
    </location>
</feature>
<feature type="sequence conflict" description="In Ref. 2; BX648732." evidence="12" ref="2">
    <original>C</original>
    <variation>G</variation>
    <location>
        <position position="1039"/>
    </location>
</feature>
<feature type="sequence conflict" description="In Ref. 2; BX648732." evidence="12" ref="2">
    <original>M</original>
    <variation>I</variation>
    <location>
        <position position="1559"/>
    </location>
</feature>
<proteinExistence type="evidence at protein level"/>
<protein>
    <recommendedName>
        <fullName evidence="13">Cation channel sperm-associated targeting subunit tau</fullName>
        <shortName evidence="11">CatSper-tau</shortName>
    </recommendedName>
    <alternativeName>
        <fullName>Amyotrophic lateral sclerosis 2 chromosomal region candidate gene 11 protein</fullName>
    </alternativeName>
    <alternativeName>
        <fullName>C2 calcium-dependent domain-containing protein 6</fullName>
    </alternativeName>
</protein>
<reference key="1">
    <citation type="journal article" date="2004" name="Nat. Genet.">
        <title>Complete sequencing and characterization of 21,243 full-length human cDNAs.</title>
        <authorList>
            <person name="Ota T."/>
            <person name="Suzuki Y."/>
            <person name="Nishikawa T."/>
            <person name="Otsuki T."/>
            <person name="Sugiyama T."/>
            <person name="Irie R."/>
            <person name="Wakamatsu A."/>
            <person name="Hayashi K."/>
            <person name="Sato H."/>
            <person name="Nagai K."/>
            <person name="Kimura K."/>
            <person name="Makita H."/>
            <person name="Sekine M."/>
            <person name="Obayashi M."/>
            <person name="Nishi T."/>
            <person name="Shibahara T."/>
            <person name="Tanaka T."/>
            <person name="Ishii S."/>
            <person name="Yamamoto J."/>
            <person name="Saito K."/>
            <person name="Kawai Y."/>
            <person name="Isono Y."/>
            <person name="Nakamura Y."/>
            <person name="Nagahari K."/>
            <person name="Murakami K."/>
            <person name="Yasuda T."/>
            <person name="Iwayanagi T."/>
            <person name="Wagatsuma M."/>
            <person name="Shiratori A."/>
            <person name="Sudo H."/>
            <person name="Hosoiri T."/>
            <person name="Kaku Y."/>
            <person name="Kodaira H."/>
            <person name="Kondo H."/>
            <person name="Sugawara M."/>
            <person name="Takahashi M."/>
            <person name="Kanda K."/>
            <person name="Yokoi T."/>
            <person name="Furuya T."/>
            <person name="Kikkawa E."/>
            <person name="Omura Y."/>
            <person name="Abe K."/>
            <person name="Kamihara K."/>
            <person name="Katsuta N."/>
            <person name="Sato K."/>
            <person name="Tanikawa M."/>
            <person name="Yamazaki M."/>
            <person name="Ninomiya K."/>
            <person name="Ishibashi T."/>
            <person name="Yamashita H."/>
            <person name="Murakawa K."/>
            <person name="Fujimori K."/>
            <person name="Tanai H."/>
            <person name="Kimata M."/>
            <person name="Watanabe M."/>
            <person name="Hiraoka S."/>
            <person name="Chiba Y."/>
            <person name="Ishida S."/>
            <person name="Ono Y."/>
            <person name="Takiguchi S."/>
            <person name="Watanabe S."/>
            <person name="Yosida M."/>
            <person name="Hotuta T."/>
            <person name="Kusano J."/>
            <person name="Kanehori K."/>
            <person name="Takahashi-Fujii A."/>
            <person name="Hara H."/>
            <person name="Tanase T.-O."/>
            <person name="Nomura Y."/>
            <person name="Togiya S."/>
            <person name="Komai F."/>
            <person name="Hara R."/>
            <person name="Takeuchi K."/>
            <person name="Arita M."/>
            <person name="Imose N."/>
            <person name="Musashino K."/>
            <person name="Yuuki H."/>
            <person name="Oshima A."/>
            <person name="Sasaki N."/>
            <person name="Aotsuka S."/>
            <person name="Yoshikawa Y."/>
            <person name="Matsunawa H."/>
            <person name="Ichihara T."/>
            <person name="Shiohata N."/>
            <person name="Sano S."/>
            <person name="Moriya S."/>
            <person name="Momiyama H."/>
            <person name="Satoh N."/>
            <person name="Takami S."/>
            <person name="Terashima Y."/>
            <person name="Suzuki O."/>
            <person name="Nakagawa S."/>
            <person name="Senoh A."/>
            <person name="Mizoguchi H."/>
            <person name="Goto Y."/>
            <person name="Shimizu F."/>
            <person name="Wakebe H."/>
            <person name="Hishigaki H."/>
            <person name="Watanabe T."/>
            <person name="Sugiyama A."/>
            <person name="Takemoto M."/>
            <person name="Kawakami B."/>
            <person name="Yamazaki M."/>
            <person name="Watanabe K."/>
            <person name="Kumagai A."/>
            <person name="Itakura S."/>
            <person name="Fukuzumi Y."/>
            <person name="Fujimori Y."/>
            <person name="Komiyama M."/>
            <person name="Tashiro H."/>
            <person name="Tanigami A."/>
            <person name="Fujiwara T."/>
            <person name="Ono T."/>
            <person name="Yamada K."/>
            <person name="Fujii Y."/>
            <person name="Ozaki K."/>
            <person name="Hirao M."/>
            <person name="Ohmori Y."/>
            <person name="Kawabata A."/>
            <person name="Hikiji T."/>
            <person name="Kobatake N."/>
            <person name="Inagaki H."/>
            <person name="Ikema Y."/>
            <person name="Okamoto S."/>
            <person name="Okitani R."/>
            <person name="Kawakami T."/>
            <person name="Noguchi S."/>
            <person name="Itoh T."/>
            <person name="Shigeta K."/>
            <person name="Senba T."/>
            <person name="Matsumura K."/>
            <person name="Nakajima Y."/>
            <person name="Mizuno T."/>
            <person name="Morinaga M."/>
            <person name="Sasaki M."/>
            <person name="Togashi T."/>
            <person name="Oyama M."/>
            <person name="Hata H."/>
            <person name="Watanabe M."/>
            <person name="Komatsu T."/>
            <person name="Mizushima-Sugano J."/>
            <person name="Satoh T."/>
            <person name="Shirai Y."/>
            <person name="Takahashi Y."/>
            <person name="Nakagawa K."/>
            <person name="Okumura K."/>
            <person name="Nagase T."/>
            <person name="Nomura N."/>
            <person name="Kikuchi H."/>
            <person name="Masuho Y."/>
            <person name="Yamashita R."/>
            <person name="Nakai K."/>
            <person name="Yada T."/>
            <person name="Nakamura Y."/>
            <person name="Ohara O."/>
            <person name="Isogai T."/>
            <person name="Sugano S."/>
        </authorList>
    </citation>
    <scope>NUCLEOTIDE SEQUENCE [LARGE SCALE MRNA] (ISOFORM 2)</scope>
    <scope>VARIANT GLN-376</scope>
    <source>
        <tissue>Testis</tissue>
    </source>
</reference>
<reference key="2">
    <citation type="journal article" date="2007" name="BMC Genomics">
        <title>The full-ORF clone resource of the German cDNA consortium.</title>
        <authorList>
            <person name="Bechtel S."/>
            <person name="Rosenfelder H."/>
            <person name="Duda A."/>
            <person name="Schmidt C.P."/>
            <person name="Ernst U."/>
            <person name="Wellenreuther R."/>
            <person name="Mehrle A."/>
            <person name="Schuster C."/>
            <person name="Bahr A."/>
            <person name="Bloecker H."/>
            <person name="Heubner D."/>
            <person name="Hoerlein A."/>
            <person name="Michel G."/>
            <person name="Wedler H."/>
            <person name="Koehrer K."/>
            <person name="Ottenwaelder B."/>
            <person name="Poustka A."/>
            <person name="Wiemann S."/>
            <person name="Schupp I."/>
        </authorList>
    </citation>
    <scope>NUCLEOTIDE SEQUENCE [LARGE SCALE MRNA] (ISOFORMS 3 AND 4)</scope>
    <scope>VARIANT GLN-376</scope>
    <source>
        <tissue>Heart</tissue>
        <tissue>Testis</tissue>
    </source>
</reference>
<reference key="3">
    <citation type="journal article" date="2005" name="Nature">
        <title>Generation and annotation of the DNA sequences of human chromosomes 2 and 4.</title>
        <authorList>
            <person name="Hillier L.W."/>
            <person name="Graves T.A."/>
            <person name="Fulton R.S."/>
            <person name="Fulton L.A."/>
            <person name="Pepin K.H."/>
            <person name="Minx P."/>
            <person name="Wagner-McPherson C."/>
            <person name="Layman D."/>
            <person name="Wylie K."/>
            <person name="Sekhon M."/>
            <person name="Becker M.C."/>
            <person name="Fewell G.A."/>
            <person name="Delehaunty K.D."/>
            <person name="Miner T.L."/>
            <person name="Nash W.E."/>
            <person name="Kremitzki C."/>
            <person name="Oddy L."/>
            <person name="Du H."/>
            <person name="Sun H."/>
            <person name="Bradshaw-Cordum H."/>
            <person name="Ali J."/>
            <person name="Carter J."/>
            <person name="Cordes M."/>
            <person name="Harris A."/>
            <person name="Isak A."/>
            <person name="van Brunt A."/>
            <person name="Nguyen C."/>
            <person name="Du F."/>
            <person name="Courtney L."/>
            <person name="Kalicki J."/>
            <person name="Ozersky P."/>
            <person name="Abbott S."/>
            <person name="Armstrong J."/>
            <person name="Belter E.A."/>
            <person name="Caruso L."/>
            <person name="Cedroni M."/>
            <person name="Cotton M."/>
            <person name="Davidson T."/>
            <person name="Desai A."/>
            <person name="Elliott G."/>
            <person name="Erb T."/>
            <person name="Fronick C."/>
            <person name="Gaige T."/>
            <person name="Haakenson W."/>
            <person name="Haglund K."/>
            <person name="Holmes A."/>
            <person name="Harkins R."/>
            <person name="Kim K."/>
            <person name="Kruchowski S.S."/>
            <person name="Strong C.M."/>
            <person name="Grewal N."/>
            <person name="Goyea E."/>
            <person name="Hou S."/>
            <person name="Levy A."/>
            <person name="Martinka S."/>
            <person name="Mead K."/>
            <person name="McLellan M.D."/>
            <person name="Meyer R."/>
            <person name="Randall-Maher J."/>
            <person name="Tomlinson C."/>
            <person name="Dauphin-Kohlberg S."/>
            <person name="Kozlowicz-Reilly A."/>
            <person name="Shah N."/>
            <person name="Swearengen-Shahid S."/>
            <person name="Snider J."/>
            <person name="Strong J.T."/>
            <person name="Thompson J."/>
            <person name="Yoakum M."/>
            <person name="Leonard S."/>
            <person name="Pearman C."/>
            <person name="Trani L."/>
            <person name="Radionenko M."/>
            <person name="Waligorski J.E."/>
            <person name="Wang C."/>
            <person name="Rock S.M."/>
            <person name="Tin-Wollam A.-M."/>
            <person name="Maupin R."/>
            <person name="Latreille P."/>
            <person name="Wendl M.C."/>
            <person name="Yang S.-P."/>
            <person name="Pohl C."/>
            <person name="Wallis J.W."/>
            <person name="Spieth J."/>
            <person name="Bieri T.A."/>
            <person name="Berkowicz N."/>
            <person name="Nelson J.O."/>
            <person name="Osborne J."/>
            <person name="Ding L."/>
            <person name="Meyer R."/>
            <person name="Sabo A."/>
            <person name="Shotland Y."/>
            <person name="Sinha P."/>
            <person name="Wohldmann P.E."/>
            <person name="Cook L.L."/>
            <person name="Hickenbotham M.T."/>
            <person name="Eldred J."/>
            <person name="Williams D."/>
            <person name="Jones T.A."/>
            <person name="She X."/>
            <person name="Ciccarelli F.D."/>
            <person name="Izaurralde E."/>
            <person name="Taylor J."/>
            <person name="Schmutz J."/>
            <person name="Myers R.M."/>
            <person name="Cox D.R."/>
            <person name="Huang X."/>
            <person name="McPherson J.D."/>
            <person name="Mardis E.R."/>
            <person name="Clifton S.W."/>
            <person name="Warren W.C."/>
            <person name="Chinwalla A.T."/>
            <person name="Eddy S.R."/>
            <person name="Marra M.A."/>
            <person name="Ovcharenko I."/>
            <person name="Furey T.S."/>
            <person name="Miller W."/>
            <person name="Eichler E.E."/>
            <person name="Bork P."/>
            <person name="Suyama M."/>
            <person name="Torrents D."/>
            <person name="Waterston R.H."/>
            <person name="Wilson R.K."/>
        </authorList>
    </citation>
    <scope>NUCLEOTIDE SEQUENCE [LARGE SCALE GENOMIC DNA]</scope>
</reference>
<reference key="4">
    <citation type="journal article" date="2004" name="Genome Res.">
        <title>The status, quality, and expansion of the NIH full-length cDNA project: the Mammalian Gene Collection (MGC).</title>
        <authorList>
            <consortium name="The MGC Project Team"/>
        </authorList>
    </citation>
    <scope>NUCLEOTIDE SEQUENCE [LARGE SCALE MRNA] (ISOFORM 1)</scope>
    <scope>VARIANT GLN-376</scope>
    <source>
        <tissue>Testis</tissue>
    </source>
</reference>
<reference key="5">
    <citation type="journal article" date="2006" name="Science">
        <title>The consensus coding sequences of human breast and colorectal cancers.</title>
        <authorList>
            <person name="Sjoeblom T."/>
            <person name="Jones S."/>
            <person name="Wood L.D."/>
            <person name="Parsons D.W."/>
            <person name="Lin J."/>
            <person name="Barber T.D."/>
            <person name="Mandelker D."/>
            <person name="Leary R.J."/>
            <person name="Ptak J."/>
            <person name="Silliman N."/>
            <person name="Szabo S."/>
            <person name="Buckhaults P."/>
            <person name="Farrell C."/>
            <person name="Meeh P."/>
            <person name="Markowitz S.D."/>
            <person name="Willis J."/>
            <person name="Dawson D."/>
            <person name="Willson J.K.V."/>
            <person name="Gazdar A.F."/>
            <person name="Hartigan J."/>
            <person name="Wu L."/>
            <person name="Liu C."/>
            <person name="Parmigiani G."/>
            <person name="Park B.H."/>
            <person name="Bachman K.E."/>
            <person name="Papadopoulos N."/>
            <person name="Vogelstein B."/>
            <person name="Kinzler K.W."/>
            <person name="Velculescu V.E."/>
        </authorList>
    </citation>
    <scope>VARIANT [LARGE SCALE ANALYSIS] MET-123</scope>
</reference>
<reference key="6">
    <citation type="journal article" date="2022" name="Cell Rep.">
        <title>C2cd6-encoded CatSpertau targets sperm calcium channel to Ca2+ signaling domains in the flagellar membrane.</title>
        <authorList>
            <person name="Hwang J.Y."/>
            <person name="Wang H."/>
            <person name="Lu Y."/>
            <person name="Ikawa M."/>
            <person name="Chung J.J."/>
        </authorList>
    </citation>
    <scope>ALTERNATIVE SPLICING</scope>
    <scope>SUBCELLULAR LOCATION</scope>
</reference>
<reference key="7">
    <citation type="journal article" date="2020" name="Hum. Reprod.">
        <title>Exome sequencing reveals novel causes as well as new candidate genes for human globozoospermia.</title>
        <authorList>
            <person name="Oud M.S."/>
            <person name="Okutman O."/>
            <person name="Hendricks L.A.J."/>
            <person name="de Vries P.F."/>
            <person name="Houston B.J."/>
            <person name="Vissers L.E.L.M."/>
            <person name="O'Bryan M.K."/>
            <person name="Ramos L."/>
            <person name="Chemes H.E."/>
            <person name="Viville S."/>
            <person name="Veltman J.A."/>
        </authorList>
    </citation>
    <scope>VARIANT SPGF68 ARG-113</scope>
    <scope>INVOLVEMENT IN SPGF68</scope>
</reference>
<sequence length="1820" mass="209056">MEPPQETNRPFSTLDNRSGQVQVLSATPLLQRNPYSSPDIMHIKGSEASSVPYALNQGTTALPKNKNQEGTGHRLLNMLRKTLKESDSEELEITQETPNLVPFGDVVGCLGIHIKNCRHFMPKISLQHYANLFIRISINKAVKCTKMCSLLSKNDEKNTVIKFDEVKYFSVQVPRRYDDKRNNILLELIQYDNREKRAFLLGSVQIHLYEVIQKGCFIEEVQVLHGNIFVCRLEVEFMFSYGNFGYGFSHQLKPLQKITEPSMFMNLAPPPERTDPVTKVITPQTVEYPAFLSPDLNVTVGTPAVQSSNQPSVVRLEKLQQQPRERLEKMKKEYRNLNTWIDKANYLESILMPKLEHKDSEETNIDEASENTKSNHPEEELENIVGVDIPLVNEEAETTANELLDNDSEKGLTIPTLNQSDQDNSTADASKNDESTPSPTEVHSLCTISNQETIKAGRIPPLGERQSESMPDRKMKNVFFPLEVKLKDNYPSILKADSSLSEVAFSPKEYNSPSFRPEYIEFKPKFQFQKFNKNGFDPFLRNINKMSVRKRKDQDIYKYRNILGAEVIEHEDQDPPYPAQSKTAGPANTTWAHDPNIFTTKMLETENKLAPDPTINTIKGLDTKNSLKENLPNVSLPSIKGESSRAGNVQANTCHLSKSLNFTPHIEYLKQSMILKSILSENLQDLSDKLFSKPEVSMNSEAREKSSSPLLSIHDKSSSSMEDNVLEKKQDLNNWLSEKDILNSKTTLSQIIKNIPADSFSEGSQIIENIPADSLLEGGQVIKNIPEYSLSEGGQIIKNIPADSFLESGPGQSPEVEEHVSKKHFEADERDFPIKKNSSTKKKHLISEVPNSKSGSSGTVHDYIMRQIFTAPIFSELEIEVKEPSETPMNLENQLPTPWKRSLSSHILFHEENADEIELPQPRSATSQIIQAFPIDTLLESGIIKVIELDKEHHKSSLLGTGITSPKGNLKDSQEYYSEIRSETEPLSEQSIPIIPKDTTSVSRAEFIQEDQNMFPQDSSYYSIANKELYLPRNGQRLCKDKNDLSSTLESLTNSLMDKLSESDEIMLKSFLKNIFNVFFKYNHSERRGQPEKELERLIQPSFTSDTEHLEELQEDFDKADKLDRKPILSPKLRVFLEELSESEVKHLKSELSKQIQHYLVERLSESGHITKEDLPKIYQNLYLMNEKAEQKGPNSFQGKYSETVKEIMSFVNNFNHHFIDKHLEIKLRSFLKEILQNYFLKNISESSLFNETASETIYPNISSLRTKSVSISFHELEQDISKGSFGRRFEINMKYPLSKSLQNYLIALSENELLHLKADLSKHLQSLFIEKLSKSGLMTKKQLEGINQHINLLNSSSIPLKYIKTHLPFRDDCHFVEKHSEKQNKYSRIVQQTTLQTVSEDKLREAELIREKEKKYFPLQNLKGNSSLIKEQKSYYTKEEAKTPSLIKVQPSSNENIQASPLSKSSEILTDILLKKLRKEHVFTQLPQAENSVHKTEIQDPYSWGGKSKITQSKAWCEKTLKMKSLDRKEHVNIYKWTVQEKPEAVLTSYPRIPNARMPREDEYLNRITFPSWQSSTLTHFNTETGEKSKLEDQYCQTLKGNNNNNKKHLVTFAQYKKEIQTLYIKPDEICSEKCAKFPEIQSFQYKVVEDEKNLKPHLFPELFKIEDLKPKVRKERDRVAQPKKSFNKIVRILPTTLPTTRIHLKKSVPRTLLHWTARRTIHDCSDKFEDLHDMTSFTHLKKVKSRSRLLGKSSDDIHNHARHSARPYTAPEVNKQRESYSGKFTSRRMVSSGLVHINDKTSDYEMHKMRPKKIKRGY</sequence>
<gene>
    <name evidence="14" type="primary">C2CD6</name>
    <name type="synonym">ALS2CR11</name>
    <name evidence="11" type="synonym">CATSPERT</name>
</gene>
<dbReference type="EMBL" id="AK058080">
    <property type="protein sequence ID" value="BAB71654.1"/>
    <property type="molecule type" value="mRNA"/>
</dbReference>
<dbReference type="EMBL" id="AL833429">
    <property type="status" value="NOT_ANNOTATED_CDS"/>
    <property type="molecule type" value="mRNA"/>
</dbReference>
<dbReference type="EMBL" id="BX648732">
    <property type="status" value="NOT_ANNOTATED_CDS"/>
    <property type="molecule type" value="mRNA"/>
</dbReference>
<dbReference type="EMBL" id="AC007282">
    <property type="protein sequence ID" value="AAY14693.1"/>
    <property type="molecule type" value="Genomic_DNA"/>
</dbReference>
<dbReference type="EMBL" id="BC030659">
    <property type="protein sequence ID" value="AAH30659.1"/>
    <property type="molecule type" value="mRNA"/>
</dbReference>
<dbReference type="CCDS" id="CCDS2349.1">
    <molecule id="Q53TS8-1"/>
</dbReference>
<dbReference type="CCDS" id="CCDS54428.1">
    <molecule id="Q53TS8-2"/>
</dbReference>
<dbReference type="CCDS" id="CCDS54429.1">
    <molecule id="Q53TS8-3"/>
</dbReference>
<dbReference type="CCDS" id="CCDS54430.1">
    <molecule id="Q53TS8-4"/>
</dbReference>
<dbReference type="RefSeq" id="NP_001161688.1">
    <molecule id="Q53TS8-2"/>
    <property type="nucleotide sequence ID" value="NM_001168216.2"/>
</dbReference>
<dbReference type="RefSeq" id="NP_001161689.1">
    <molecule id="Q53TS8-3"/>
    <property type="nucleotide sequence ID" value="NM_001168217.2"/>
</dbReference>
<dbReference type="RefSeq" id="NP_001161693.1">
    <molecule id="Q53TS8-4"/>
    <property type="nucleotide sequence ID" value="NM_001168221.2"/>
</dbReference>
<dbReference type="RefSeq" id="NP_689738.3">
    <molecule id="Q53TS8-1"/>
    <property type="nucleotide sequence ID" value="NM_152525.5"/>
</dbReference>
<dbReference type="RefSeq" id="XP_011509038.1">
    <molecule id="Q53TS8-2"/>
    <property type="nucleotide sequence ID" value="XM_011510736.3"/>
</dbReference>
<dbReference type="BioGRID" id="127358">
    <property type="interactions" value="75"/>
</dbReference>
<dbReference type="FunCoup" id="Q53TS8">
    <property type="interactions" value="11"/>
</dbReference>
<dbReference type="IntAct" id="Q53TS8">
    <property type="interactions" value="70"/>
</dbReference>
<dbReference type="STRING" id="9606.ENSP00000409937"/>
<dbReference type="GlyGen" id="Q53TS8">
    <property type="glycosylation" value="2 sites, 1 O-linked glycan (1 site)"/>
</dbReference>
<dbReference type="iPTMnet" id="Q53TS8"/>
<dbReference type="PhosphoSitePlus" id="Q53TS8"/>
<dbReference type="BioMuta" id="C2CD6"/>
<dbReference type="DMDM" id="74726955"/>
<dbReference type="jPOST" id="Q53TS8"/>
<dbReference type="MassIVE" id="Q53TS8"/>
<dbReference type="PaxDb" id="9606-ENSP00000409937"/>
<dbReference type="PeptideAtlas" id="Q53TS8"/>
<dbReference type="ProteomicsDB" id="20317"/>
<dbReference type="ProteomicsDB" id="62551">
    <molecule id="Q53TS8-1"/>
</dbReference>
<dbReference type="ProteomicsDB" id="62552">
    <molecule id="Q53TS8-2"/>
</dbReference>
<dbReference type="ProteomicsDB" id="7805"/>
<dbReference type="Antibodypedia" id="35141">
    <property type="antibodies" value="155 antibodies from 22 providers"/>
</dbReference>
<dbReference type="DNASU" id="151254"/>
<dbReference type="Ensembl" id="ENST00000286195.7">
    <molecule id="Q53TS8-1"/>
    <property type="protein sequence ID" value="ENSP00000286195.3"/>
    <property type="gene ID" value="ENSG00000155754.15"/>
</dbReference>
<dbReference type="Ensembl" id="ENST00000439140.6">
    <molecule id="Q53TS8-4"/>
    <property type="protein sequence ID" value="ENSP00000409937.1"/>
    <property type="gene ID" value="ENSG00000155754.15"/>
</dbReference>
<dbReference type="Ensembl" id="ENST00000439802.5">
    <molecule id="Q53TS8-2"/>
    <property type="protein sequence ID" value="ENSP00000400672.1"/>
    <property type="gene ID" value="ENSG00000155754.15"/>
</dbReference>
<dbReference type="Ensembl" id="ENST00000450242.1">
    <molecule id="Q53TS8-3"/>
    <property type="protein sequence ID" value="ENSP00000399016.1"/>
    <property type="gene ID" value="ENSG00000155754.15"/>
</dbReference>
<dbReference type="GeneID" id="151254"/>
<dbReference type="KEGG" id="hsa:151254"/>
<dbReference type="MANE-Select" id="ENST00000439140.6">
    <property type="protein sequence ID" value="ENSP00000409937.1"/>
    <property type="RefSeq nucleotide sequence ID" value="NM_001168221.2"/>
    <property type="RefSeq protein sequence ID" value="NP_001161693.1"/>
</dbReference>
<dbReference type="UCSC" id="uc002uye.4">
    <molecule id="Q53TS8-4"/>
    <property type="organism name" value="human"/>
</dbReference>
<dbReference type="AGR" id="HGNC:14438"/>
<dbReference type="CTD" id="151254"/>
<dbReference type="DisGeNET" id="151254"/>
<dbReference type="GeneCards" id="C2CD6"/>
<dbReference type="HGNC" id="HGNC:14438">
    <property type="gene designation" value="C2CD6"/>
</dbReference>
<dbReference type="HPA" id="ENSG00000155754">
    <property type="expression patterns" value="Tissue enriched (testis)"/>
</dbReference>
<dbReference type="MalaCards" id="C2CD6"/>
<dbReference type="MIM" id="619776">
    <property type="type" value="gene"/>
</dbReference>
<dbReference type="MIM" id="619805">
    <property type="type" value="phenotype"/>
</dbReference>
<dbReference type="neXtProt" id="NX_Q53TS8"/>
<dbReference type="OpenTargets" id="ENSG00000155754"/>
<dbReference type="Orphanet" id="171709">
    <property type="disease" value="Male infertility due to globozoospermia"/>
</dbReference>
<dbReference type="PharmGKB" id="PA24734"/>
<dbReference type="VEuPathDB" id="HostDB:ENSG00000155754"/>
<dbReference type="eggNOG" id="ENOG502S23V">
    <property type="taxonomic scope" value="Eukaryota"/>
</dbReference>
<dbReference type="GeneTree" id="ENSGT00390000018209"/>
<dbReference type="HOGENOM" id="CLU_030502_1_0_1"/>
<dbReference type="InParanoid" id="Q53TS8"/>
<dbReference type="OMA" id="YQDCSDR"/>
<dbReference type="OrthoDB" id="2144823at2759"/>
<dbReference type="PAN-GO" id="Q53TS8">
    <property type="GO annotations" value="0 GO annotations based on evolutionary models"/>
</dbReference>
<dbReference type="PhylomeDB" id="Q53TS8"/>
<dbReference type="TreeFam" id="TF328407"/>
<dbReference type="PathwayCommons" id="Q53TS8"/>
<dbReference type="SignaLink" id="Q53TS8"/>
<dbReference type="BioGRID-ORCS" id="151254">
    <property type="hits" value="17 hits in 1136 CRISPR screens"/>
</dbReference>
<dbReference type="ChiTaRS" id="ALS2CR11">
    <property type="organism name" value="human"/>
</dbReference>
<dbReference type="GenomeRNAi" id="151254"/>
<dbReference type="Pharos" id="Q53TS8">
    <property type="development level" value="Tdark"/>
</dbReference>
<dbReference type="PRO" id="PR:Q53TS8"/>
<dbReference type="Proteomes" id="UP000005640">
    <property type="component" value="Chromosome 2"/>
</dbReference>
<dbReference type="RNAct" id="Q53TS8">
    <property type="molecule type" value="protein"/>
</dbReference>
<dbReference type="Bgee" id="ENSG00000155754">
    <property type="expression patterns" value="Expressed in sperm and 98 other cell types or tissues"/>
</dbReference>
<dbReference type="ExpressionAtlas" id="Q53TS8">
    <property type="expression patterns" value="baseline and differential"/>
</dbReference>
<dbReference type="GO" id="GO:0036128">
    <property type="term" value="C:CatSper complex"/>
    <property type="evidence" value="ECO:0000250"/>
    <property type="project" value="UniProtKB"/>
</dbReference>
<dbReference type="GO" id="GO:0097228">
    <property type="term" value="C:sperm principal piece"/>
    <property type="evidence" value="ECO:0000314"/>
    <property type="project" value="UniProtKB"/>
</dbReference>
<dbReference type="GO" id="GO:0030317">
    <property type="term" value="P:flagellated sperm motility"/>
    <property type="evidence" value="ECO:0000250"/>
    <property type="project" value="UniProtKB"/>
</dbReference>
<dbReference type="GO" id="GO:0048240">
    <property type="term" value="P:sperm capacitation"/>
    <property type="evidence" value="ECO:0000250"/>
    <property type="project" value="UniProtKB"/>
</dbReference>
<dbReference type="GO" id="GO:0007283">
    <property type="term" value="P:spermatogenesis"/>
    <property type="evidence" value="ECO:0000250"/>
    <property type="project" value="UniProtKB"/>
</dbReference>
<dbReference type="GO" id="GO:0098876">
    <property type="term" value="P:vesicle-mediated transport to the plasma membrane"/>
    <property type="evidence" value="ECO:0000250"/>
    <property type="project" value="UniProtKB"/>
</dbReference>
<dbReference type="InterPro" id="IPR000008">
    <property type="entry name" value="C2_dom"/>
</dbReference>
<dbReference type="InterPro" id="IPR031462">
    <property type="entry name" value="CTSRT"/>
</dbReference>
<dbReference type="InterPro" id="IPR048363">
    <property type="entry name" value="CTSRT_C2"/>
</dbReference>
<dbReference type="PANTHER" id="PTHR21665">
    <property type="entry name" value="CATION CHANNEL SPERM-ASSOCIATED TARGETING SUBUNIT TAU"/>
    <property type="match status" value="1"/>
</dbReference>
<dbReference type="PANTHER" id="PTHR21665:SF2">
    <property type="entry name" value="CATION CHANNEL SPERM-ASSOCIATED TARGETING SUBUNIT TAU"/>
    <property type="match status" value="1"/>
</dbReference>
<dbReference type="Pfam" id="PF15729">
    <property type="entry name" value="CTSRT"/>
    <property type="match status" value="1"/>
</dbReference>
<dbReference type="PROSITE" id="PS50004">
    <property type="entry name" value="C2"/>
    <property type="match status" value="1"/>
</dbReference>
<accession>Q53TS8</accession>
<accession>C9IZH7</accession>
<accession>E9PGG4</accession>
<accession>Q8NCN6</accession>
<accession>Q96LN4</accession>
<name>CTSRT_HUMAN</name>
<evidence type="ECO:0000250" key="1">
    <source>
        <dbReference type="UniProtKB" id="A0A5F8MPU3"/>
    </source>
</evidence>
<evidence type="ECO:0000250" key="2">
    <source>
        <dbReference type="UniProtKB" id="E9Q9F6"/>
    </source>
</evidence>
<evidence type="ECO:0000255" key="3">
    <source>
        <dbReference type="PROSITE-ProRule" id="PRU00041"/>
    </source>
</evidence>
<evidence type="ECO:0000256" key="4">
    <source>
        <dbReference type="SAM" id="MobiDB-lite"/>
    </source>
</evidence>
<evidence type="ECO:0000269" key="5">
    <source>
    </source>
</evidence>
<evidence type="ECO:0000269" key="6">
    <source>
    </source>
</evidence>
<evidence type="ECO:0000269" key="7">
    <source>
    </source>
</evidence>
<evidence type="ECO:0000269" key="8">
    <source>
    </source>
</evidence>
<evidence type="ECO:0000269" key="9">
    <source>
    </source>
</evidence>
<evidence type="ECO:0000269" key="10">
    <source>
    </source>
</evidence>
<evidence type="ECO:0000303" key="11">
    <source>
    </source>
</evidence>
<evidence type="ECO:0000305" key="12"/>
<evidence type="ECO:0000305" key="13">
    <source>
    </source>
</evidence>
<evidence type="ECO:0000312" key="14">
    <source>
        <dbReference type="HGNC" id="HGNC:14438"/>
    </source>
</evidence>
<keyword id="KW-0025">Alternative splicing</keyword>
<keyword id="KW-1003">Cell membrane</keyword>
<keyword id="KW-0966">Cell projection</keyword>
<keyword id="KW-0969">Cilium</keyword>
<keyword id="KW-0282">Flagellum</keyword>
<keyword id="KW-0472">Membrane</keyword>
<keyword id="KW-1267">Proteomics identification</keyword>
<keyword id="KW-1185">Reference proteome</keyword>
<comment type="function">
    <text evidence="1">Auxiliary component of the CatSper complex, a complex involved in sperm cell hyperactivation. Sperm cell hyperactivation is needed for sperm motility which is essential late in the preparation of sperm for fertilization. Required for CatSper complex targeting and trafficking into the quadrilinear nanodomains. Targets the preassembled CatSper complexes to elongating flagella, where it links the channel-carrying vesicles and motor proteins.</text>
</comment>
<comment type="subunit">
    <text evidence="1">Component of the CatSper complex or CatSpermasome composed of the core pore-forming members CATSPER1, CATSPER2, CATSPER3 and CATSPER4 as well as auxiliary members CATSPERB, CATSPERG, CATSPERD, CATSPERE, CATSPERZ, C2CD6/CATSPERT, TMEM249, TMEM262 and EFCAB9. HSPA1 may be an additional auxiliary complex member. The core complex members CATSPER1, CATSPER2, CATSPER3 and CATSPER4 form a heterotetrameric channel. The auxiliary CATSPERB, CATSPERG, CATSPERD and CATSPERE subunits form a pavilion-like structure over the pore which stabilizes the complex through interactions with CATSPER4, CATSPER3, CATSPER1 and CATSPER2 respectively. SLCO6C1 interacts with CATSPERE and TMEM262/CATSPERH interacts with CATSPERB, further stabilizing the complex. C2CD6/CATSPERT interacts at least with CATSPERD and is required for targeting the CatSper complex in the flagellar membrane.</text>
</comment>
<comment type="interaction">
    <interactant intactId="EBI-739879">
        <id>Q53TS8</id>
    </interactant>
    <interactant intactId="EBI-17721098">
        <id>Q8WXI4-2</id>
        <label>ACOT11</label>
    </interactant>
    <organismsDiffer>false</organismsDiffer>
    <experiments>3</experiments>
</comment>
<comment type="interaction">
    <interactant intactId="EBI-739879">
        <id>Q53TS8</id>
    </interactant>
    <interactant intactId="EBI-2880652">
        <id>Q08043</id>
        <label>ACTN3</label>
    </interactant>
    <organismsDiffer>false</organismsDiffer>
    <experiments>3</experiments>
</comment>
<comment type="interaction">
    <interactant intactId="EBI-739879">
        <id>Q53TS8</id>
    </interactant>
    <interactant intactId="EBI-13280688">
        <id>Q8NFD2</id>
        <label>ANKK1</label>
    </interactant>
    <organismsDiffer>false</organismsDiffer>
    <experiments>3</experiments>
</comment>
<comment type="interaction">
    <interactant intactId="EBI-739879">
        <id>Q53TS8</id>
    </interactant>
    <interactant intactId="EBI-11529439">
        <id>P63010-2</id>
        <label>AP2B1</label>
    </interactant>
    <organismsDiffer>false</organismsDiffer>
    <experiments>3</experiments>
</comment>
<comment type="interaction">
    <interactant intactId="EBI-739879">
        <id>Q53TS8</id>
    </interactant>
    <interactant intactId="EBI-1805814">
        <id>Q96RK4</id>
        <label>BBS4</label>
    </interactant>
    <organismsDiffer>false</organismsDiffer>
    <experiments>3</experiments>
</comment>
<comment type="interaction">
    <interactant intactId="EBI-739879">
        <id>Q53TS8</id>
    </interactant>
    <interactant intactId="EBI-751319">
        <id>Q9H257</id>
        <label>CARD9</label>
    </interactant>
    <organismsDiffer>false</organismsDiffer>
    <experiments>3</experiments>
</comment>
<comment type="interaction">
    <interactant intactId="EBI-739879">
        <id>Q53TS8</id>
    </interactant>
    <interactant intactId="EBI-2548868">
        <id>P0C7W6</id>
        <label>CCDC172</label>
    </interactant>
    <organismsDiffer>false</organismsDiffer>
    <experiments>3</experiments>
</comment>
<comment type="interaction">
    <interactant intactId="EBI-739879">
        <id>Q53TS8</id>
    </interactant>
    <interactant intactId="EBI-10961624">
        <id>Q2TAC2-2</id>
        <label>CCDC57</label>
    </interactant>
    <organismsDiffer>false</organismsDiffer>
    <experiments>3</experiments>
</comment>
<comment type="interaction">
    <interactant intactId="EBI-739879">
        <id>Q53TS8</id>
    </interactant>
    <interactant intactId="EBI-1181367">
        <id>Q01850</id>
        <label>CDR2</label>
    </interactant>
    <organismsDiffer>false</organismsDiffer>
    <experiments>3</experiments>
</comment>
<comment type="interaction">
    <interactant intactId="EBI-739879">
        <id>Q53TS8</id>
    </interactant>
    <interactant intactId="EBI-743375">
        <id>Q9NX63</id>
        <label>CHCHD3</label>
    </interactant>
    <organismsDiffer>false</organismsDiffer>
    <experiments>3</experiments>
</comment>
<comment type="interaction">
    <interactant intactId="EBI-739879">
        <id>Q53TS8</id>
    </interactant>
    <interactant intactId="EBI-2562014">
        <id>Q9UKZ1</id>
        <label>CNOT11</label>
    </interactant>
    <organismsDiffer>false</organismsDiffer>
    <experiments>3</experiments>
</comment>
<comment type="interaction">
    <interactant intactId="EBI-739879">
        <id>Q53TS8</id>
    </interactant>
    <interactant intactId="EBI-6873363">
        <id>Q8WUE5</id>
        <label>CT55</label>
    </interactant>
    <organismsDiffer>false</organismsDiffer>
    <experiments>3</experiments>
</comment>
<comment type="interaction">
    <interactant intactId="EBI-739879">
        <id>Q53TS8</id>
    </interactant>
    <interactant intactId="EBI-11988027">
        <id>Q9NRI5-2</id>
        <label>DISC1</label>
    </interactant>
    <organismsDiffer>false</organismsDiffer>
    <experiments>3</experiments>
</comment>
<comment type="interaction">
    <interactant intactId="EBI-739879">
        <id>Q53TS8</id>
    </interactant>
    <interactant intactId="EBI-3952284">
        <id>Q96EY1-2</id>
        <label>DNAJA3</label>
    </interactant>
    <organismsDiffer>false</organismsDiffer>
    <experiments>3</experiments>
</comment>
<comment type="interaction">
    <interactant intactId="EBI-739879">
        <id>Q53TS8</id>
    </interactant>
    <interactant intactId="EBI-19153639">
        <id>Q9NTX9</id>
        <label>FAM217B</label>
    </interactant>
    <organismsDiffer>false</organismsDiffer>
    <experiments>3</experiments>
</comment>
<comment type="interaction">
    <interactant intactId="EBI-739879">
        <id>Q53TS8</id>
    </interactant>
    <interactant intactId="EBI-701903">
        <id>Q14192</id>
        <label>FHL2</label>
    </interactant>
    <organismsDiffer>false</organismsDiffer>
    <experiments>3</experiments>
</comment>
<comment type="interaction">
    <interactant intactId="EBI-739879">
        <id>Q53TS8</id>
    </interactant>
    <interactant intactId="EBI-618309">
        <id>Q08379</id>
        <label>GOLGA2</label>
    </interactant>
    <organismsDiffer>false</organismsDiffer>
    <experiments>6</experiments>
</comment>
<comment type="interaction">
    <interactant intactId="EBI-739879">
        <id>Q53TS8</id>
    </interactant>
    <interactant intactId="EBI-11519926">
        <id>Q6PI77</id>
        <label>GPRASP3</label>
    </interactant>
    <organismsDiffer>false</organismsDiffer>
    <experiments>3</experiments>
</comment>
<comment type="interaction">
    <interactant intactId="EBI-739879">
        <id>Q53TS8</id>
    </interactant>
    <interactant intactId="EBI-10962409">
        <id>Q6IC98</id>
        <label>GRAMD4</label>
    </interactant>
    <organismsDiffer>false</organismsDiffer>
    <experiments>3</experiments>
</comment>
<comment type="interaction">
    <interactant intactId="EBI-739879">
        <id>Q53TS8</id>
    </interactant>
    <interactant intactId="EBI-712814">
        <id>P54257</id>
        <label>HAP1</label>
    </interactant>
    <organismsDiffer>false</organismsDiffer>
    <experiments>3</experiments>
</comment>
<comment type="interaction">
    <interactant intactId="EBI-739879">
        <id>Q53TS8</id>
    </interactant>
    <interactant intactId="EBI-7116203">
        <id>O75031</id>
        <label>HSF2BP</label>
    </interactant>
    <organismsDiffer>false</organismsDiffer>
    <experiments>3</experiments>
</comment>
<comment type="interaction">
    <interactant intactId="EBI-739879">
        <id>Q53TS8</id>
    </interactant>
    <interactant intactId="EBI-739074">
        <id>Q9UJY1</id>
        <label>HSPB8</label>
    </interactant>
    <organismsDiffer>false</organismsDiffer>
    <experiments>3</experiments>
</comment>
<comment type="interaction">
    <interactant intactId="EBI-739879">
        <id>Q53TS8</id>
    </interactant>
    <interactant intactId="EBI-747204">
        <id>Q9UKT9</id>
        <label>IKZF3</label>
    </interactant>
    <organismsDiffer>false</organismsDiffer>
    <experiments>3</experiments>
</comment>
<comment type="interaction">
    <interactant intactId="EBI-739879">
        <id>Q53TS8</id>
    </interactant>
    <interactant intactId="EBI-17181882">
        <id>O75564-2</id>
        <label>JRK</label>
    </interactant>
    <organismsDiffer>false</organismsDiffer>
    <experiments>3</experiments>
</comment>
<comment type="interaction">
    <interactant intactId="EBI-739879">
        <id>Q53TS8</id>
    </interactant>
    <interactant intactId="EBI-14069005">
        <id>Q9BVG8-5</id>
        <label>KIFC3</label>
    </interactant>
    <organismsDiffer>false</organismsDiffer>
    <experiments>3</experiments>
</comment>
<comment type="interaction">
    <interactant intactId="EBI-739879">
        <id>Q53TS8</id>
    </interactant>
    <interactant intactId="EBI-10171552">
        <id>A1A4E9</id>
        <label>KRT13</label>
    </interactant>
    <organismsDiffer>false</organismsDiffer>
    <experiments>3</experiments>
</comment>
<comment type="interaction">
    <interactant intactId="EBI-739879">
        <id>Q53TS8</id>
    </interactant>
    <interactant intactId="EBI-739566">
        <id>P19012</id>
        <label>KRT15</label>
    </interactant>
    <organismsDiffer>false</organismsDiffer>
    <experiments>3</experiments>
</comment>
<comment type="interaction">
    <interactant intactId="EBI-739879">
        <id>Q53TS8</id>
    </interactant>
    <interactant intactId="EBI-948001">
        <id>Q15323</id>
        <label>KRT31</label>
    </interactant>
    <organismsDiffer>false</organismsDiffer>
    <experiments>6</experiments>
</comment>
<comment type="interaction">
    <interactant intactId="EBI-739879">
        <id>Q53TS8</id>
    </interactant>
    <interactant intactId="EBI-10171697">
        <id>Q6A162</id>
        <label>KRT40</label>
    </interactant>
    <organismsDiffer>false</organismsDiffer>
    <experiments>3</experiments>
</comment>
<comment type="interaction">
    <interactant intactId="EBI-739879">
        <id>Q53TS8</id>
    </interactant>
    <interactant intactId="EBI-2949715">
        <id>O95678</id>
        <label>KRT75</label>
    </interactant>
    <organismsDiffer>false</organismsDiffer>
    <experiments>3</experiments>
</comment>
<comment type="interaction">
    <interactant intactId="EBI-739879">
        <id>Q53TS8</id>
    </interactant>
    <interactant intactId="EBI-11990598">
        <id>P48742</id>
        <label>LHX1</label>
    </interactant>
    <organismsDiffer>false</organismsDiffer>
    <experiments>5</experiments>
</comment>
<comment type="interaction">
    <interactant intactId="EBI-739879">
        <id>Q53TS8</id>
    </interactant>
    <interactant intactId="EBI-12039345">
        <id>Q9UBR4-2</id>
        <label>LHX3</label>
    </interactant>
    <organismsDiffer>false</organismsDiffer>
    <experiments>3</experiments>
</comment>
<comment type="interaction">
    <interactant intactId="EBI-739879">
        <id>Q53TS8</id>
    </interactant>
    <interactant intactId="EBI-741037">
        <id>Q9BRK4</id>
        <label>LZTS2</label>
    </interactant>
    <organismsDiffer>false</organismsDiffer>
    <experiments>3</experiments>
</comment>
<comment type="interaction">
    <interactant intactId="EBI-739879">
        <id>Q53TS8</id>
    </interactant>
    <interactant intactId="EBI-348259">
        <id>Q96EZ8</id>
        <label>MCRS1</label>
    </interactant>
    <organismsDiffer>false</organismsDiffer>
    <experiments>3</experiments>
</comment>
<comment type="interaction">
    <interactant intactId="EBI-739879">
        <id>Q53TS8</id>
    </interactant>
    <interactant intactId="EBI-399266">
        <id>Q9HAF1</id>
        <label>MEAF6</label>
    </interactant>
    <organismsDiffer>false</organismsDiffer>
    <experiments>3</experiments>
</comment>
<comment type="interaction">
    <interactant intactId="EBI-739879">
        <id>Q53TS8</id>
    </interactant>
    <interactant intactId="EBI-2864512">
        <id>P50221</id>
        <label>MEOX1</label>
    </interactant>
    <organismsDiffer>false</organismsDiffer>
    <experiments>3</experiments>
</comment>
<comment type="interaction">
    <interactant intactId="EBI-739879">
        <id>Q53TS8</id>
    </interactant>
    <interactant intactId="EBI-2548751">
        <id>Q8TD10</id>
        <label>MIPOL1</label>
    </interactant>
    <organismsDiffer>false</organismsDiffer>
    <experiments>3</experiments>
</comment>
<comment type="interaction">
    <interactant intactId="EBI-739879">
        <id>Q53TS8</id>
    </interactant>
    <interactant intactId="EBI-742948">
        <id>Q5JR59</id>
        <label>MTUS2</label>
    </interactant>
    <organismsDiffer>false</organismsDiffer>
    <experiments>3</experiments>
</comment>
<comment type="interaction">
    <interactant intactId="EBI-739879">
        <id>Q53TS8</id>
    </interactant>
    <interactant intactId="EBI-874629">
        <id>Q13285</id>
        <label>NR5A1</label>
    </interactant>
    <organismsDiffer>false</organismsDiffer>
    <experiments>3</experiments>
</comment>
<comment type="interaction">
    <interactant intactId="EBI-739879">
        <id>Q53TS8</id>
    </interactant>
    <interactant intactId="EBI-747278">
        <id>P26367</id>
        <label>PAX6</label>
    </interactant>
    <organismsDiffer>false</organismsDiffer>
    <experiments>3</experiments>
</comment>
<comment type="interaction">
    <interactant intactId="EBI-739879">
        <id>Q53TS8</id>
    </interactant>
    <interactant intactId="EBI-14066006">
        <id>Q4G0R1</id>
        <label>PIBF1</label>
    </interactant>
    <organismsDiffer>false</organismsDiffer>
    <experiments>3</experiments>
</comment>
<comment type="interaction">
    <interactant intactId="EBI-739879">
        <id>Q53TS8</id>
    </interactant>
    <interactant intactId="EBI-373337">
        <id>O76064</id>
        <label>RNF8</label>
    </interactant>
    <organismsDiffer>false</organismsDiffer>
    <experiments>3</experiments>
</comment>
<comment type="interaction">
    <interactant intactId="EBI-739879">
        <id>Q53TS8</id>
    </interactant>
    <interactant intactId="EBI-744066">
        <id>Q9UM82</id>
        <label>SPATA2</label>
    </interactant>
    <organismsDiffer>false</organismsDiffer>
    <experiments>3</experiments>
</comment>
<comment type="interaction">
    <interactant intactId="EBI-739879">
        <id>Q53TS8</id>
    </interactant>
    <interactant intactId="EBI-2554984">
        <id>Q9Y6A5</id>
        <label>TACC3</label>
    </interactant>
    <organismsDiffer>false</organismsDiffer>
    <experiments>3</experiments>
</comment>
<comment type="interaction">
    <interactant intactId="EBI-739879">
        <id>Q53TS8</id>
    </interactant>
    <interactant intactId="EBI-3923210">
        <id>Q8TDR4</id>
        <label>TCP10L</label>
    </interactant>
    <organismsDiffer>false</organismsDiffer>
    <experiments>3</experiments>
</comment>
<comment type="interaction">
    <interactant intactId="EBI-739879">
        <id>Q53TS8</id>
    </interactant>
    <interactant intactId="EBI-1105213">
        <id>Q9UBB9</id>
        <label>TFIP11</label>
    </interactant>
    <organismsDiffer>false</organismsDiffer>
    <experiments>3</experiments>
</comment>
<comment type="interaction">
    <interactant intactId="EBI-739879">
        <id>Q53TS8</id>
    </interactant>
    <interactant intactId="EBI-11741437">
        <id>Q08117-2</id>
        <label>TLE5</label>
    </interactant>
    <organismsDiffer>false</organismsDiffer>
    <experiments>3</experiments>
</comment>
<comment type="interaction">
    <interactant intactId="EBI-739879">
        <id>Q53TS8</id>
    </interactant>
    <interactant intactId="EBI-359224">
        <id>Q13077</id>
        <label>TRAF1</label>
    </interactant>
    <organismsDiffer>false</organismsDiffer>
    <experiments>3</experiments>
</comment>
<comment type="interaction">
    <interactant intactId="EBI-739879">
        <id>Q53TS8</id>
    </interactant>
    <interactant intactId="EBI-355744">
        <id>Q12933</id>
        <label>TRAF2</label>
    </interactant>
    <organismsDiffer>false</organismsDiffer>
    <experiments>3</experiments>
</comment>
<comment type="interaction">
    <interactant intactId="EBI-739879">
        <id>Q53TS8</id>
    </interactant>
    <interactant intactId="EBI-740098">
        <id>P36406</id>
        <label>TRIM23</label>
    </interactant>
    <organismsDiffer>false</organismsDiffer>
    <experiments>3</experiments>
</comment>
<comment type="interaction">
    <interactant intactId="EBI-739879">
        <id>Q53TS8</id>
    </interactant>
    <interactant intactId="EBI-2130429">
        <id>Q9BYV2</id>
        <label>TRIM54</label>
    </interactant>
    <organismsDiffer>false</organismsDiffer>
    <experiments>3</experiments>
</comment>
<comment type="interaction">
    <interactant intactId="EBI-739879">
        <id>Q53TS8</id>
    </interactant>
    <interactant intactId="EBI-3918381">
        <id>Q96PN8</id>
        <label>TSSK3</label>
    </interactant>
    <organismsDiffer>false</organismsDiffer>
    <experiments>3</experiments>
</comment>
<comment type="interaction">
    <interactant intactId="EBI-739879">
        <id>Q53TS8</id>
    </interactant>
    <interactant intactId="EBI-2107455">
        <id>Q08AM6</id>
        <label>VAC14</label>
    </interactant>
    <organismsDiffer>false</organismsDiffer>
    <experiments>3</experiments>
</comment>
<comment type="interaction">
    <interactant intactId="EBI-739879">
        <id>Q53TS8</id>
    </interactant>
    <interactant intactId="EBI-2799833">
        <id>Q8N1B4</id>
        <label>VPS52</label>
    </interactant>
    <organismsDiffer>false</organismsDiffer>
    <experiments>3</experiments>
</comment>
<comment type="interaction">
    <interactant intactId="EBI-739879">
        <id>Q53TS8</id>
    </interactant>
    <interactant intactId="EBI-17269964">
        <id>Q6S9Z5</id>
        <label>ZNF474</label>
    </interactant>
    <organismsDiffer>false</organismsDiffer>
    <experiments>3</experiments>
</comment>
<comment type="subcellular location">
    <subcellularLocation>
        <location evidence="2">Cell projection</location>
        <location evidence="2">Cilium</location>
        <location evidence="2">Flagellum membrane</location>
    </subcellularLocation>
    <text evidence="2">Specifically located in the principal piece of sperm tail.</text>
</comment>
<comment type="alternative products">
    <event type="alternative splicing"/>
    <isoform>
        <id>Q53TS8-4</id>
        <name>1</name>
        <name evidence="11">L</name>
        <sequence type="displayed"/>
    </isoform>
    <isoform>
        <id>Q53TS8-1</id>
        <name>2</name>
        <name evidence="11">S</name>
        <sequence type="described" ref="VSP_061600 VSP_061602"/>
    </isoform>
    <isoform>
        <id>Q53TS8-2</id>
        <name>3</name>
        <sequence type="described" ref="VSP_061598"/>
    </isoform>
    <isoform>
        <id>Q53TS8-3</id>
        <name>4</name>
        <sequence type="described" ref="VSP_061599 VSP_061601"/>
    </isoform>
</comment>
<comment type="tissue specificity">
    <text evidence="10">Expressed in testis (at protein level).</text>
</comment>
<comment type="disease" evidence="9">
    <disease id="DI-06371">
        <name>Spermatogenic failure 68</name>
        <acronym>SPGF68</acronym>
        <description>An autosomal recessive male infertility disorder characterized by globozoospermia. Affected individuals have a normal sperm count, but spermatozoa are round-headed and lack the acrosome. In addition to pure globozoospermia, some patients have a mixture of acrosomeless spermatozoa and spermatozoa with small or detached acrosomes, which is defined as acrosomal hypoplasia.</description>
        <dbReference type="MIM" id="619805"/>
    </disease>
    <text>The disease may be caused by variants affecting the gene represented in this entry.</text>
</comment>
<organism>
    <name type="scientific">Homo sapiens</name>
    <name type="common">Human</name>
    <dbReference type="NCBI Taxonomy" id="9606"/>
    <lineage>
        <taxon>Eukaryota</taxon>
        <taxon>Metazoa</taxon>
        <taxon>Chordata</taxon>
        <taxon>Craniata</taxon>
        <taxon>Vertebrata</taxon>
        <taxon>Euteleostomi</taxon>
        <taxon>Mammalia</taxon>
        <taxon>Eutheria</taxon>
        <taxon>Euarchontoglires</taxon>
        <taxon>Primates</taxon>
        <taxon>Haplorrhini</taxon>
        <taxon>Catarrhini</taxon>
        <taxon>Hominidae</taxon>
        <taxon>Homo</taxon>
    </lineage>
</organism>